<reference key="1">
    <citation type="journal article" date="2000" name="Nature">
        <title>Sequence and analysis of chromosome 1 of the plant Arabidopsis thaliana.</title>
        <authorList>
            <person name="Theologis A."/>
            <person name="Ecker J.R."/>
            <person name="Palm C.J."/>
            <person name="Federspiel N.A."/>
            <person name="Kaul S."/>
            <person name="White O."/>
            <person name="Alonso J."/>
            <person name="Altafi H."/>
            <person name="Araujo R."/>
            <person name="Bowman C.L."/>
            <person name="Brooks S.Y."/>
            <person name="Buehler E."/>
            <person name="Chan A."/>
            <person name="Chao Q."/>
            <person name="Chen H."/>
            <person name="Cheuk R.F."/>
            <person name="Chin C.W."/>
            <person name="Chung M.K."/>
            <person name="Conn L."/>
            <person name="Conway A.B."/>
            <person name="Conway A.R."/>
            <person name="Creasy T.H."/>
            <person name="Dewar K."/>
            <person name="Dunn P."/>
            <person name="Etgu P."/>
            <person name="Feldblyum T.V."/>
            <person name="Feng J.-D."/>
            <person name="Fong B."/>
            <person name="Fujii C.Y."/>
            <person name="Gill J.E."/>
            <person name="Goldsmith A.D."/>
            <person name="Haas B."/>
            <person name="Hansen N.F."/>
            <person name="Hughes B."/>
            <person name="Huizar L."/>
            <person name="Hunter J.L."/>
            <person name="Jenkins J."/>
            <person name="Johnson-Hopson C."/>
            <person name="Khan S."/>
            <person name="Khaykin E."/>
            <person name="Kim C.J."/>
            <person name="Koo H.L."/>
            <person name="Kremenetskaia I."/>
            <person name="Kurtz D.B."/>
            <person name="Kwan A."/>
            <person name="Lam B."/>
            <person name="Langin-Hooper S."/>
            <person name="Lee A."/>
            <person name="Lee J.M."/>
            <person name="Lenz C.A."/>
            <person name="Li J.H."/>
            <person name="Li Y.-P."/>
            <person name="Lin X."/>
            <person name="Liu S.X."/>
            <person name="Liu Z.A."/>
            <person name="Luros J.S."/>
            <person name="Maiti R."/>
            <person name="Marziali A."/>
            <person name="Militscher J."/>
            <person name="Miranda M."/>
            <person name="Nguyen M."/>
            <person name="Nierman W.C."/>
            <person name="Osborne B.I."/>
            <person name="Pai G."/>
            <person name="Peterson J."/>
            <person name="Pham P.K."/>
            <person name="Rizzo M."/>
            <person name="Rooney T."/>
            <person name="Rowley D."/>
            <person name="Sakano H."/>
            <person name="Salzberg S.L."/>
            <person name="Schwartz J.R."/>
            <person name="Shinn P."/>
            <person name="Southwick A.M."/>
            <person name="Sun H."/>
            <person name="Tallon L.J."/>
            <person name="Tambunga G."/>
            <person name="Toriumi M.J."/>
            <person name="Town C.D."/>
            <person name="Utterback T."/>
            <person name="Van Aken S."/>
            <person name="Vaysberg M."/>
            <person name="Vysotskaia V.S."/>
            <person name="Walker M."/>
            <person name="Wu D."/>
            <person name="Yu G."/>
            <person name="Fraser C.M."/>
            <person name="Venter J.C."/>
            <person name="Davis R.W."/>
        </authorList>
    </citation>
    <scope>NUCLEOTIDE SEQUENCE [LARGE SCALE GENOMIC DNA]</scope>
    <source>
        <strain>cv. Columbia</strain>
    </source>
</reference>
<reference key="2">
    <citation type="journal article" date="2017" name="Plant J.">
        <title>Araport11: a complete reannotation of the Arabidopsis thaliana reference genome.</title>
        <authorList>
            <person name="Cheng C.Y."/>
            <person name="Krishnakumar V."/>
            <person name="Chan A.P."/>
            <person name="Thibaud-Nissen F."/>
            <person name="Schobel S."/>
            <person name="Town C.D."/>
        </authorList>
    </citation>
    <scope>GENOME REANNOTATION</scope>
    <source>
        <strain>cv. Columbia</strain>
    </source>
</reference>
<reference key="3">
    <citation type="submission" date="2006-07" db="EMBL/GenBank/DDBJ databases">
        <title>Large-scale analysis of RIKEN Arabidopsis full-length (RAFL) cDNAs.</title>
        <authorList>
            <person name="Totoki Y."/>
            <person name="Seki M."/>
            <person name="Ishida J."/>
            <person name="Nakajima M."/>
            <person name="Enju A."/>
            <person name="Kamiya A."/>
            <person name="Narusaka M."/>
            <person name="Shin-i T."/>
            <person name="Nakagawa M."/>
            <person name="Sakamoto N."/>
            <person name="Oishi K."/>
            <person name="Kohara Y."/>
            <person name="Kobayashi M."/>
            <person name="Toyoda A."/>
            <person name="Sakaki Y."/>
            <person name="Sakurai T."/>
            <person name="Iida K."/>
            <person name="Akiyama K."/>
            <person name="Satou M."/>
            <person name="Toyoda T."/>
            <person name="Konagaya A."/>
            <person name="Carninci P."/>
            <person name="Kawai J."/>
            <person name="Hayashizaki Y."/>
            <person name="Shinozaki K."/>
        </authorList>
    </citation>
    <scope>NUCLEOTIDE SEQUENCE [LARGE SCALE MRNA]</scope>
    <source>
        <strain>cv. Columbia</strain>
    </source>
</reference>
<reference key="4">
    <citation type="submission" date="2006-12" db="EMBL/GenBank/DDBJ databases">
        <title>Arabidopsis ORF clones.</title>
        <authorList>
            <person name="Bautista V.R."/>
            <person name="Kim C.J."/>
            <person name="Chen H."/>
            <person name="Quinitio C."/>
            <person name="Ecker J.R."/>
        </authorList>
    </citation>
    <scope>NUCLEOTIDE SEQUENCE [LARGE SCALE MRNA]</scope>
    <source>
        <strain>cv. Columbia</strain>
    </source>
</reference>
<feature type="chain" id="PRO_0000283171" description="F-box/kelch-repeat protein At1g16250">
    <location>
        <begin position="1"/>
        <end position="383"/>
    </location>
</feature>
<feature type="domain" description="F-box">
    <location>
        <begin position="7"/>
        <end position="54"/>
    </location>
</feature>
<feature type="repeat" description="Kelch 1">
    <location>
        <begin position="50"/>
        <end position="103"/>
    </location>
</feature>
<feature type="repeat" description="Kelch 2">
    <location>
        <begin position="109"/>
        <end position="165"/>
    </location>
</feature>
<feature type="repeat" description="Kelch 3">
    <location>
        <begin position="166"/>
        <end position="214"/>
    </location>
</feature>
<feature type="repeat" description="Kelch 4">
    <location>
        <begin position="216"/>
        <end position="263"/>
    </location>
</feature>
<feature type="repeat" description="Kelch 5">
    <location>
        <begin position="318"/>
        <end position="377"/>
    </location>
</feature>
<sequence length="383" mass="43066">MESIEQSIIPGLPDDLALRCIAKLSHGYHGVLECVSRGWRDLVRGADYSCYKARNGWSGSWLFVLTERSKNQWVAYDPEADRWHPLPRTRAVQDGWHHSGFACVCVSNCLLVIGGCYAPSVSSFPHQKPVVTKDVMRFDPFKKQWKMVASMRTPRTHFACTSVSGKVYVAGGRNLTHSRGIPSAEVYDPVADRWEELPAMPRPQMDCSGLSYRGCFHVLSDQVGFAEQNSSEVFNPRDMTWSTVEDVWPFSRAMQFAVQVMKNDRVYTIVDWGESLIKTRDTDEGEWYNVGSVPSVVLPNHPRELEAFGYGFAALRNELYVIGGKVLKWEESGAGRFDIVRLPVVRVCNPLDRPLNWRETKPMCIPAGGSIIGCVSLEESSPP</sequence>
<evidence type="ECO:0000305" key="1"/>
<proteinExistence type="evidence at transcript level"/>
<keyword id="KW-0880">Kelch repeat</keyword>
<keyword id="KW-1185">Reference proteome</keyword>
<keyword id="KW-0677">Repeat</keyword>
<gene>
    <name type="ordered locus">At1g16250</name>
    <name type="ORF">F3O9.5</name>
</gene>
<dbReference type="EMBL" id="AC006341">
    <property type="protein sequence ID" value="AAD34677.1"/>
    <property type="status" value="ALT_SEQ"/>
    <property type="molecule type" value="Genomic_DNA"/>
</dbReference>
<dbReference type="EMBL" id="CP002684">
    <property type="protein sequence ID" value="AEE29426.1"/>
    <property type="molecule type" value="Genomic_DNA"/>
</dbReference>
<dbReference type="EMBL" id="CP002684">
    <property type="protein sequence ID" value="ANM59214.1"/>
    <property type="molecule type" value="Genomic_DNA"/>
</dbReference>
<dbReference type="EMBL" id="AK226518">
    <property type="protein sequence ID" value="BAE98658.1"/>
    <property type="molecule type" value="mRNA"/>
</dbReference>
<dbReference type="EMBL" id="BT029548">
    <property type="protein sequence ID" value="ABL66804.1"/>
    <property type="molecule type" value="mRNA"/>
</dbReference>
<dbReference type="PIR" id="D86297">
    <property type="entry name" value="D86297"/>
</dbReference>
<dbReference type="RefSeq" id="NP_001321591.1">
    <property type="nucleotide sequence ID" value="NM_001332217.1"/>
</dbReference>
<dbReference type="RefSeq" id="NP_173075.3">
    <property type="nucleotide sequence ID" value="NM_101491.5"/>
</dbReference>
<dbReference type="SMR" id="Q0WW40"/>
<dbReference type="BioGRID" id="23434">
    <property type="interactions" value="1"/>
</dbReference>
<dbReference type="FunCoup" id="Q0WW40">
    <property type="interactions" value="1"/>
</dbReference>
<dbReference type="IntAct" id="Q0WW40">
    <property type="interactions" value="1"/>
</dbReference>
<dbReference type="PaxDb" id="3702-AT1G16250.1"/>
<dbReference type="ProteomicsDB" id="230935"/>
<dbReference type="EnsemblPlants" id="AT1G16250.1">
    <property type="protein sequence ID" value="AT1G16250.1"/>
    <property type="gene ID" value="AT1G16250"/>
</dbReference>
<dbReference type="EnsemblPlants" id="AT1G16250.2">
    <property type="protein sequence ID" value="AT1G16250.2"/>
    <property type="gene ID" value="AT1G16250"/>
</dbReference>
<dbReference type="GeneID" id="838194"/>
<dbReference type="Gramene" id="AT1G16250.1">
    <property type="protein sequence ID" value="AT1G16250.1"/>
    <property type="gene ID" value="AT1G16250"/>
</dbReference>
<dbReference type="Gramene" id="AT1G16250.2">
    <property type="protein sequence ID" value="AT1G16250.2"/>
    <property type="gene ID" value="AT1G16250"/>
</dbReference>
<dbReference type="KEGG" id="ath:AT1G16250"/>
<dbReference type="Araport" id="AT1G16250"/>
<dbReference type="TAIR" id="AT1G16250"/>
<dbReference type="eggNOG" id="KOG1072">
    <property type="taxonomic scope" value="Eukaryota"/>
</dbReference>
<dbReference type="HOGENOM" id="CLU_028510_1_1_1"/>
<dbReference type="InParanoid" id="Q0WW40"/>
<dbReference type="OMA" id="GGHICTV"/>
<dbReference type="PhylomeDB" id="Q0WW40"/>
<dbReference type="PRO" id="PR:Q0WW40"/>
<dbReference type="Proteomes" id="UP000006548">
    <property type="component" value="Chromosome 1"/>
</dbReference>
<dbReference type="ExpressionAtlas" id="Q0WW40">
    <property type="expression patterns" value="baseline and differential"/>
</dbReference>
<dbReference type="CDD" id="cd22152">
    <property type="entry name" value="F-box_AtAFR-like"/>
    <property type="match status" value="1"/>
</dbReference>
<dbReference type="Gene3D" id="2.120.10.80">
    <property type="entry name" value="Kelch-type beta propeller"/>
    <property type="match status" value="1"/>
</dbReference>
<dbReference type="InterPro" id="IPR001810">
    <property type="entry name" value="F-box_dom"/>
</dbReference>
<dbReference type="InterPro" id="IPR015915">
    <property type="entry name" value="Kelch-typ_b-propeller"/>
</dbReference>
<dbReference type="InterPro" id="IPR006652">
    <property type="entry name" value="Kelch_1"/>
</dbReference>
<dbReference type="PANTHER" id="PTHR46344:SF28">
    <property type="entry name" value="F-BOX DOMAIN-CONTAINING PROTEIN"/>
    <property type="match status" value="1"/>
</dbReference>
<dbReference type="PANTHER" id="PTHR46344">
    <property type="entry name" value="OS02G0202900 PROTEIN"/>
    <property type="match status" value="1"/>
</dbReference>
<dbReference type="Pfam" id="PF00646">
    <property type="entry name" value="F-box"/>
    <property type="match status" value="1"/>
</dbReference>
<dbReference type="Pfam" id="PF01344">
    <property type="entry name" value="Kelch_1"/>
    <property type="match status" value="2"/>
</dbReference>
<dbReference type="SMART" id="SM00612">
    <property type="entry name" value="Kelch"/>
    <property type="match status" value="2"/>
</dbReference>
<dbReference type="SUPFAM" id="SSF117281">
    <property type="entry name" value="Kelch motif"/>
    <property type="match status" value="1"/>
</dbReference>
<protein>
    <recommendedName>
        <fullName>F-box/kelch-repeat protein At1g16250</fullName>
    </recommendedName>
</protein>
<organism>
    <name type="scientific">Arabidopsis thaliana</name>
    <name type="common">Mouse-ear cress</name>
    <dbReference type="NCBI Taxonomy" id="3702"/>
    <lineage>
        <taxon>Eukaryota</taxon>
        <taxon>Viridiplantae</taxon>
        <taxon>Streptophyta</taxon>
        <taxon>Embryophyta</taxon>
        <taxon>Tracheophyta</taxon>
        <taxon>Spermatophyta</taxon>
        <taxon>Magnoliopsida</taxon>
        <taxon>eudicotyledons</taxon>
        <taxon>Gunneridae</taxon>
        <taxon>Pentapetalae</taxon>
        <taxon>rosids</taxon>
        <taxon>malvids</taxon>
        <taxon>Brassicales</taxon>
        <taxon>Brassicaceae</taxon>
        <taxon>Camelineae</taxon>
        <taxon>Arabidopsis</taxon>
    </lineage>
</organism>
<name>FBK5_ARATH</name>
<accession>Q0WW40</accession>
<accession>Q9SA24</accession>
<comment type="sequence caution" evidence="1">
    <conflict type="erroneous gene model prediction">
        <sequence resource="EMBL-CDS" id="AAD34677"/>
    </conflict>
</comment>